<proteinExistence type="inferred from homology"/>
<name>MSRQ_ECODH</name>
<comment type="function">
    <text evidence="1">Part of the MsrPQ system that repairs oxidized periplasmic proteins containing methionine sulfoxide residues (Met-O), using respiratory chain electrons. Thus protects these proteins from oxidative-stress damage caused by reactive species of oxygen and chlorine generated by the host defense mechanisms. MsrPQ is essential for the maintenance of envelope integrity under bleach stress, rescuing a wide series of structurally unrelated periplasmic proteins from methionine oxidation, including the primary periplasmic chaperone SurA and the lipoprotein Pal. MsrQ provides electrons for reduction to the reductase catalytic subunit MsrP, using the quinone pool of the respiratory chain.</text>
</comment>
<comment type="cofactor">
    <cofactor evidence="1">
        <name>FMN</name>
        <dbReference type="ChEBI" id="CHEBI:58210"/>
    </cofactor>
    <text evidence="1">Binds 1 FMN per subunit.</text>
</comment>
<comment type="cofactor">
    <cofactor evidence="1">
        <name>heme b</name>
        <dbReference type="ChEBI" id="CHEBI:60344"/>
    </cofactor>
    <text evidence="1">Binds 1 heme b (iron(II)-protoporphyrin IX) group per subunit.</text>
</comment>
<comment type="subunit">
    <text evidence="1">Heterodimer of a catalytic subunit (MsrP) and a heme-binding subunit (MsrQ).</text>
</comment>
<comment type="subcellular location">
    <subcellularLocation>
        <location evidence="1">Cell inner membrane</location>
        <topology evidence="1">Multi-pass membrane protein</topology>
    </subcellularLocation>
</comment>
<comment type="similarity">
    <text evidence="1">Belongs to the MsrQ family.</text>
</comment>
<gene>
    <name evidence="1" type="primary">msrQ</name>
    <name type="ordered locus">ECDH10B_2115</name>
</gene>
<feature type="chain" id="PRO_1000138732" description="Protein-methionine-sulfoxide reductase heme-binding subunit MsrQ">
    <location>
        <begin position="1"/>
        <end position="211"/>
    </location>
</feature>
<feature type="transmembrane region" description="Helical" evidence="1">
    <location>
        <begin position="10"/>
        <end position="30"/>
    </location>
</feature>
<feature type="transmembrane region" description="Helical" evidence="1">
    <location>
        <begin position="82"/>
        <end position="102"/>
    </location>
</feature>
<feature type="transmembrane region" description="Helical" evidence="1">
    <location>
        <begin position="116"/>
        <end position="136"/>
    </location>
</feature>
<feature type="transmembrane region" description="Helical" evidence="1">
    <location>
        <begin position="153"/>
        <end position="173"/>
    </location>
</feature>
<organism>
    <name type="scientific">Escherichia coli (strain K12 / DH10B)</name>
    <dbReference type="NCBI Taxonomy" id="316385"/>
    <lineage>
        <taxon>Bacteria</taxon>
        <taxon>Pseudomonadati</taxon>
        <taxon>Pseudomonadota</taxon>
        <taxon>Gammaproteobacteria</taxon>
        <taxon>Enterobacterales</taxon>
        <taxon>Enterobacteriaceae</taxon>
        <taxon>Escherichia</taxon>
    </lineage>
</organism>
<evidence type="ECO:0000255" key="1">
    <source>
        <dbReference type="HAMAP-Rule" id="MF_01207"/>
    </source>
</evidence>
<reference key="1">
    <citation type="journal article" date="2008" name="J. Bacteriol.">
        <title>The complete genome sequence of Escherichia coli DH10B: insights into the biology of a laboratory workhorse.</title>
        <authorList>
            <person name="Durfee T."/>
            <person name="Nelson R."/>
            <person name="Baldwin S."/>
            <person name="Plunkett G. III"/>
            <person name="Burland V."/>
            <person name="Mau B."/>
            <person name="Petrosino J.F."/>
            <person name="Qin X."/>
            <person name="Muzny D.M."/>
            <person name="Ayele M."/>
            <person name="Gibbs R.A."/>
            <person name="Csorgo B."/>
            <person name="Posfai G."/>
            <person name="Weinstock G.M."/>
            <person name="Blattner F.R."/>
        </authorList>
    </citation>
    <scope>NUCLEOTIDE SEQUENCE [LARGE SCALE GENOMIC DNA]</scope>
    <source>
        <strain>K12 / DH10B</strain>
    </source>
</reference>
<accession>B1X6C1</accession>
<dbReference type="EMBL" id="CP000948">
    <property type="protein sequence ID" value="ACB03153.1"/>
    <property type="molecule type" value="Genomic_DNA"/>
</dbReference>
<dbReference type="RefSeq" id="WP_001240091.1">
    <property type="nucleotide sequence ID" value="NC_010473.1"/>
</dbReference>
<dbReference type="KEGG" id="ecd:ECDH10B_2115"/>
<dbReference type="HOGENOM" id="CLU_080662_1_0_6"/>
<dbReference type="GO" id="GO:0005886">
    <property type="term" value="C:plasma membrane"/>
    <property type="evidence" value="ECO:0007669"/>
    <property type="project" value="UniProtKB-SubCell"/>
</dbReference>
<dbReference type="GO" id="GO:0009055">
    <property type="term" value="F:electron transfer activity"/>
    <property type="evidence" value="ECO:0007669"/>
    <property type="project" value="UniProtKB-UniRule"/>
</dbReference>
<dbReference type="GO" id="GO:0010181">
    <property type="term" value="F:FMN binding"/>
    <property type="evidence" value="ECO:0007669"/>
    <property type="project" value="UniProtKB-UniRule"/>
</dbReference>
<dbReference type="GO" id="GO:0020037">
    <property type="term" value="F:heme binding"/>
    <property type="evidence" value="ECO:0007669"/>
    <property type="project" value="UniProtKB-UniRule"/>
</dbReference>
<dbReference type="GO" id="GO:0046872">
    <property type="term" value="F:metal ion binding"/>
    <property type="evidence" value="ECO:0007669"/>
    <property type="project" value="UniProtKB-KW"/>
</dbReference>
<dbReference type="GO" id="GO:0016679">
    <property type="term" value="F:oxidoreductase activity, acting on diphenols and related substances as donors"/>
    <property type="evidence" value="ECO:0007669"/>
    <property type="project" value="TreeGrafter"/>
</dbReference>
<dbReference type="GO" id="GO:0030091">
    <property type="term" value="P:protein repair"/>
    <property type="evidence" value="ECO:0007669"/>
    <property type="project" value="UniProtKB-UniRule"/>
</dbReference>
<dbReference type="HAMAP" id="MF_01207">
    <property type="entry name" value="MsrQ"/>
    <property type="match status" value="1"/>
</dbReference>
<dbReference type="InterPro" id="IPR013130">
    <property type="entry name" value="Fe3_Rdtase_TM_dom"/>
</dbReference>
<dbReference type="InterPro" id="IPR022837">
    <property type="entry name" value="MsrQ-like"/>
</dbReference>
<dbReference type="NCBIfam" id="NF003830">
    <property type="entry name" value="PRK05419.1-1"/>
    <property type="match status" value="1"/>
</dbReference>
<dbReference type="NCBIfam" id="NF003831">
    <property type="entry name" value="PRK05419.1-2"/>
    <property type="match status" value="1"/>
</dbReference>
<dbReference type="NCBIfam" id="NF003832">
    <property type="entry name" value="PRK05419.1-4"/>
    <property type="match status" value="1"/>
</dbReference>
<dbReference type="PANTHER" id="PTHR36964">
    <property type="entry name" value="PROTEIN-METHIONINE-SULFOXIDE REDUCTASE HEME-BINDING SUBUNIT MSRQ"/>
    <property type="match status" value="1"/>
</dbReference>
<dbReference type="PANTHER" id="PTHR36964:SF1">
    <property type="entry name" value="PROTEIN-METHIONINE-SULFOXIDE REDUCTASE HEME-BINDING SUBUNIT MSRQ"/>
    <property type="match status" value="1"/>
</dbReference>
<dbReference type="Pfam" id="PF01794">
    <property type="entry name" value="Ferric_reduct"/>
    <property type="match status" value="1"/>
</dbReference>
<keyword id="KW-0997">Cell inner membrane</keyword>
<keyword id="KW-1003">Cell membrane</keyword>
<keyword id="KW-0249">Electron transport</keyword>
<keyword id="KW-0285">Flavoprotein</keyword>
<keyword id="KW-0288">FMN</keyword>
<keyword id="KW-0349">Heme</keyword>
<keyword id="KW-0408">Iron</keyword>
<keyword id="KW-0472">Membrane</keyword>
<keyword id="KW-0479">Metal-binding</keyword>
<keyword id="KW-0812">Transmembrane</keyword>
<keyword id="KW-1133">Transmembrane helix</keyword>
<keyword id="KW-0813">Transport</keyword>
<protein>
    <recommendedName>
        <fullName evidence="1">Protein-methionine-sulfoxide reductase heme-binding subunit MsrQ</fullName>
    </recommendedName>
    <alternativeName>
        <fullName evidence="1">Flavocytochrome MsrQ</fullName>
    </alternativeName>
</protein>
<sequence>MRLTAKQVTWLKVCLHLAGLLPFLWLVWAINHGGLGADPVKDIQHFTGRTALKFLLATLLITPLARYAKQPLLIRTRRLLGLWCFAWATLHLTSYALLELGVNNLALLGKELITRPYLTLGIISWVILLALAFTSTQAMQRKLGKHWQQLHNFVYLVAILAPIHYLWSVKIISPQPLIYAGLAVLLLALRYKKLRSLFNRLRKQVHNKLSV</sequence>